<feature type="transit peptide" description="Mitochondrion" evidence="4">
    <location>
        <begin position="1"/>
        <end position="22"/>
    </location>
</feature>
<feature type="chain" id="PRO_0000007259" description="DnaJ homolog l(2)tid, mitochondrial" evidence="4">
    <location>
        <begin position="23"/>
        <end position="529"/>
    </location>
</feature>
<feature type="domain" description="J" evidence="5">
    <location>
        <begin position="80"/>
        <end position="145"/>
    </location>
</feature>
<feature type="repeat" description="CXXCXGXG motif; approximate">
    <location>
        <begin position="243"/>
        <end position="250"/>
    </location>
</feature>
<feature type="repeat" description="CXXCXGXG motif">
    <location>
        <begin position="260"/>
        <end position="267"/>
    </location>
</feature>
<feature type="repeat" description="CXXCXGXG motif; approximate">
    <location>
        <begin position="282"/>
        <end position="289"/>
    </location>
</feature>
<feature type="repeat" description="CXXCXGXG motif">
    <location>
        <begin position="296"/>
        <end position="303"/>
    </location>
</feature>
<feature type="zinc finger region" description="CR-type" evidence="6">
    <location>
        <begin position="230"/>
        <end position="308"/>
    </location>
</feature>
<feature type="region of interest" description="Disordered" evidence="7">
    <location>
        <begin position="441"/>
        <end position="529"/>
    </location>
</feature>
<feature type="compositionally biased region" description="Basic and acidic residues" evidence="7">
    <location>
        <begin position="497"/>
        <end position="508"/>
    </location>
</feature>
<feature type="binding site" evidence="2">
    <location>
        <position position="243"/>
    </location>
    <ligand>
        <name>Zn(2+)</name>
        <dbReference type="ChEBI" id="CHEBI:29105"/>
        <label>1</label>
    </ligand>
</feature>
<feature type="binding site" evidence="2">
    <location>
        <position position="246"/>
    </location>
    <ligand>
        <name>Zn(2+)</name>
        <dbReference type="ChEBI" id="CHEBI:29105"/>
        <label>1</label>
    </ligand>
</feature>
<feature type="binding site" evidence="2">
    <location>
        <position position="260"/>
    </location>
    <ligand>
        <name>Zn(2+)</name>
        <dbReference type="ChEBI" id="CHEBI:29105"/>
        <label>2</label>
    </ligand>
</feature>
<feature type="binding site" evidence="2">
    <location>
        <position position="263"/>
    </location>
    <ligand>
        <name>Zn(2+)</name>
        <dbReference type="ChEBI" id="CHEBI:29105"/>
        <label>2</label>
    </ligand>
</feature>
<feature type="binding site" evidence="2">
    <location>
        <position position="282"/>
    </location>
    <ligand>
        <name>Zn(2+)</name>
        <dbReference type="ChEBI" id="CHEBI:29105"/>
        <label>2</label>
    </ligand>
</feature>
<feature type="binding site" evidence="2">
    <location>
        <position position="285"/>
    </location>
    <ligand>
        <name>Zn(2+)</name>
        <dbReference type="ChEBI" id="CHEBI:29105"/>
        <label>2</label>
    </ligand>
</feature>
<feature type="binding site" evidence="2">
    <location>
        <position position="296"/>
    </location>
    <ligand>
        <name>Zn(2+)</name>
        <dbReference type="ChEBI" id="CHEBI:29105"/>
        <label>1</label>
    </ligand>
</feature>
<feature type="binding site" evidence="2">
    <location>
        <position position="299"/>
    </location>
    <ligand>
        <name>Zn(2+)</name>
        <dbReference type="ChEBI" id="CHEBI:29105"/>
        <label>1</label>
    </ligand>
</feature>
<feature type="modified residue" description="Omega-N-methylarginine" evidence="2">
    <location>
        <position position="35"/>
    </location>
</feature>
<feature type="modified residue" description="N6-acetyllysine" evidence="3">
    <location>
        <position position="121"/>
    </location>
</feature>
<reference key="1">
    <citation type="journal article" date="1997" name="Gene">
        <title>Sequence, molecular organization and products of the Drosophila virilis homologs of the D. melanogaster nested genes lethal(2) tumorous imaginal discs [l(2)tid] and lethal(2) neighbour of tid [l(2)not].</title>
        <authorList>
            <person name="Kaymer M."/>
            <person name="Debes A."/>
            <person name="Kress H."/>
            <person name="Kurzik-Dumke U."/>
        </authorList>
    </citation>
    <scope>NUCLEOTIDE SEQUENCE [GENOMIC DNA]</scope>
    <scope>DEVELOPMENTAL STAGE</scope>
</reference>
<organism>
    <name type="scientific">Drosophila virilis</name>
    <name type="common">Fruit fly</name>
    <dbReference type="NCBI Taxonomy" id="7244"/>
    <lineage>
        <taxon>Eukaryota</taxon>
        <taxon>Metazoa</taxon>
        <taxon>Ecdysozoa</taxon>
        <taxon>Arthropoda</taxon>
        <taxon>Hexapoda</taxon>
        <taxon>Insecta</taxon>
        <taxon>Pterygota</taxon>
        <taxon>Neoptera</taxon>
        <taxon>Endopterygota</taxon>
        <taxon>Diptera</taxon>
        <taxon>Brachycera</taxon>
        <taxon>Muscomorpha</taxon>
        <taxon>Ephydroidea</taxon>
        <taxon>Drosophilidae</taxon>
        <taxon>Drosophila</taxon>
    </lineage>
</organism>
<comment type="function">
    <text evidence="1">May act as a tumor suppressor in larval imaginal disks.</text>
</comment>
<comment type="subcellular location">
    <subcellularLocation>
        <location evidence="1">Mitochondrion outer membrane</location>
    </subcellularLocation>
</comment>
<comment type="developmental stage">
    <text evidence="8">Expressed throughout development, highest expression is seen during larval development.</text>
</comment>
<protein>
    <recommendedName>
        <fullName evidence="9">DnaJ homolog l(2)tid, mitochondrial</fullName>
    </recommendedName>
    <alternativeName>
        <fullName evidence="9">Protein lethal(2)tumorous imaginal discs</fullName>
    </alternativeName>
    <alternativeName>
        <fullName evidence="9">TID58</fullName>
    </alternativeName>
</protein>
<sequence>MISCKNLCVLRQLPLKNCRRHYSAIQSSAALLSVRPTKWTPKPAAAGGAVSAWQQRTTAKQHQQQQRRSLFSSSRMQAKDYYATLGVAKNANAKDIKKAYYELAKKYHPDTNKDDPDASKKFQDVSEAYEVLSDDQKRREYDTYGQTTENMNRQGAGGAGGFGGGPFGPDGFSQNWQFRSTIDPEELFRKIFGEGNFRSNSFDDFADSKFGFGQAQELVMDLTFAQAARGVNKDVNVNVVDQCPKCAGSKCEPGTKPGRCQYCNGTGFETISTGPFVMRSTCRYCQGTRQYIKYPCAECEGKGQTVQRRKVTVPVPAGIENGQTVRMQVGSKELFVTFRVERSDYFRRDGADVHTDAPISLAQAVLGGTVRVQGVYEDQWLNIEPGTSSHRKIALRGKGLKRVNAHGHGDHYVHIKIEVPKKLSQEQRALLEAYAELEEDTPGQIHGMAQRKDGSKKATAGASETKTDAQPAGRTADSGSQGTSRAGAETESAKGQQSEKSETRRKDQQTGGESGSGGGFLNKIKSMFN</sequence>
<keyword id="KW-0007">Acetylation</keyword>
<keyword id="KW-0143">Chaperone</keyword>
<keyword id="KW-0217">Developmental protein</keyword>
<keyword id="KW-0472">Membrane</keyword>
<keyword id="KW-0479">Metal-binding</keyword>
<keyword id="KW-0488">Methylation</keyword>
<keyword id="KW-0496">Mitochondrion</keyword>
<keyword id="KW-1000">Mitochondrion outer membrane</keyword>
<keyword id="KW-0677">Repeat</keyword>
<keyword id="KW-0809">Transit peptide</keyword>
<keyword id="KW-0862">Zinc</keyword>
<keyword id="KW-0863">Zinc-finger</keyword>
<name>DJTID_DROVI</name>
<dbReference type="EMBL" id="Y07700">
    <property type="protein sequence ID" value="CAA68962.1"/>
    <property type="molecule type" value="Genomic_DNA"/>
</dbReference>
<dbReference type="SMR" id="Q24331"/>
<dbReference type="eggNOG" id="KOG0715">
    <property type="taxonomic scope" value="Eukaryota"/>
</dbReference>
<dbReference type="OrthoDB" id="291007at2759"/>
<dbReference type="GO" id="GO:0005829">
    <property type="term" value="C:cytosol"/>
    <property type="evidence" value="ECO:0007669"/>
    <property type="project" value="EnsemblMetazoa"/>
</dbReference>
<dbReference type="GO" id="GO:0005741">
    <property type="term" value="C:mitochondrial outer membrane"/>
    <property type="evidence" value="ECO:0007669"/>
    <property type="project" value="UniProtKB-SubCell"/>
</dbReference>
<dbReference type="GO" id="GO:0005524">
    <property type="term" value="F:ATP binding"/>
    <property type="evidence" value="ECO:0007669"/>
    <property type="project" value="InterPro"/>
</dbReference>
<dbReference type="GO" id="GO:0031072">
    <property type="term" value="F:heat shock protein binding"/>
    <property type="evidence" value="ECO:0007669"/>
    <property type="project" value="InterPro"/>
</dbReference>
<dbReference type="GO" id="GO:0005113">
    <property type="term" value="F:patched binding"/>
    <property type="evidence" value="ECO:0007669"/>
    <property type="project" value="EnsemblMetazoa"/>
</dbReference>
<dbReference type="GO" id="GO:0051082">
    <property type="term" value="F:unfolded protein binding"/>
    <property type="evidence" value="ECO:0007669"/>
    <property type="project" value="InterPro"/>
</dbReference>
<dbReference type="GO" id="GO:0008270">
    <property type="term" value="F:zinc ion binding"/>
    <property type="evidence" value="ECO:0007669"/>
    <property type="project" value="UniProtKB-KW"/>
</dbReference>
<dbReference type="GO" id="GO:0007005">
    <property type="term" value="P:mitochondrion organization"/>
    <property type="evidence" value="ECO:0007669"/>
    <property type="project" value="TreeGrafter"/>
</dbReference>
<dbReference type="GO" id="GO:0043066">
    <property type="term" value="P:negative regulation of apoptotic process"/>
    <property type="evidence" value="ECO:0007669"/>
    <property type="project" value="TreeGrafter"/>
</dbReference>
<dbReference type="GO" id="GO:0045879">
    <property type="term" value="P:negative regulation of smoothened signaling pathway"/>
    <property type="evidence" value="ECO:0007669"/>
    <property type="project" value="EnsemblMetazoa"/>
</dbReference>
<dbReference type="GO" id="GO:0006457">
    <property type="term" value="P:protein folding"/>
    <property type="evidence" value="ECO:0007669"/>
    <property type="project" value="InterPro"/>
</dbReference>
<dbReference type="GO" id="GO:0009408">
    <property type="term" value="P:response to heat"/>
    <property type="evidence" value="ECO:0007669"/>
    <property type="project" value="InterPro"/>
</dbReference>
<dbReference type="CDD" id="cd06257">
    <property type="entry name" value="DnaJ"/>
    <property type="match status" value="1"/>
</dbReference>
<dbReference type="CDD" id="cd10747">
    <property type="entry name" value="DnaJ_C"/>
    <property type="match status" value="1"/>
</dbReference>
<dbReference type="CDD" id="cd10719">
    <property type="entry name" value="DnaJ_zf"/>
    <property type="match status" value="1"/>
</dbReference>
<dbReference type="FunFam" id="2.60.260.20:FF:000005">
    <property type="entry name" value="Chaperone protein dnaJ 1, mitochondrial"/>
    <property type="match status" value="1"/>
</dbReference>
<dbReference type="FunFam" id="2.10.230.10:FF:000003">
    <property type="entry name" value="dnaJ homolog subfamily A member 3, mitochondrial"/>
    <property type="match status" value="1"/>
</dbReference>
<dbReference type="FunFam" id="1.10.287.110:FF:000075">
    <property type="entry name" value="Uncharacterized protein, isoform D"/>
    <property type="match status" value="1"/>
</dbReference>
<dbReference type="Gene3D" id="1.10.287.110">
    <property type="entry name" value="DnaJ domain"/>
    <property type="match status" value="1"/>
</dbReference>
<dbReference type="Gene3D" id="2.10.230.10">
    <property type="entry name" value="Heat shock protein DnaJ, cysteine-rich domain"/>
    <property type="match status" value="1"/>
</dbReference>
<dbReference type="Gene3D" id="2.60.260.20">
    <property type="entry name" value="Urease metallochaperone UreE, N-terminal domain"/>
    <property type="match status" value="2"/>
</dbReference>
<dbReference type="HAMAP" id="MF_01152">
    <property type="entry name" value="DnaJ"/>
    <property type="match status" value="1"/>
</dbReference>
<dbReference type="InterPro" id="IPR051938">
    <property type="entry name" value="Apopto_cytoskel_mod"/>
</dbReference>
<dbReference type="InterPro" id="IPR012724">
    <property type="entry name" value="DnaJ"/>
</dbReference>
<dbReference type="InterPro" id="IPR002939">
    <property type="entry name" value="DnaJ_C"/>
</dbReference>
<dbReference type="InterPro" id="IPR001623">
    <property type="entry name" value="DnaJ_domain"/>
</dbReference>
<dbReference type="InterPro" id="IPR018253">
    <property type="entry name" value="DnaJ_domain_CS"/>
</dbReference>
<dbReference type="InterPro" id="IPR008971">
    <property type="entry name" value="HSP40/DnaJ_pept-bd"/>
</dbReference>
<dbReference type="InterPro" id="IPR001305">
    <property type="entry name" value="HSP_DnaJ_Cys-rich_dom"/>
</dbReference>
<dbReference type="InterPro" id="IPR036410">
    <property type="entry name" value="HSP_DnaJ_Cys-rich_dom_sf"/>
</dbReference>
<dbReference type="InterPro" id="IPR036869">
    <property type="entry name" value="J_dom_sf"/>
</dbReference>
<dbReference type="PANTHER" id="PTHR44145">
    <property type="entry name" value="DNAJ HOMOLOG SUBFAMILY A MEMBER 3, MITOCHONDRIAL"/>
    <property type="match status" value="1"/>
</dbReference>
<dbReference type="PANTHER" id="PTHR44145:SF3">
    <property type="entry name" value="DNAJ HOMOLOG SUBFAMILY A MEMBER 3, MITOCHONDRIAL"/>
    <property type="match status" value="1"/>
</dbReference>
<dbReference type="Pfam" id="PF00226">
    <property type="entry name" value="DnaJ"/>
    <property type="match status" value="1"/>
</dbReference>
<dbReference type="Pfam" id="PF01556">
    <property type="entry name" value="DnaJ_C"/>
    <property type="match status" value="1"/>
</dbReference>
<dbReference type="Pfam" id="PF00684">
    <property type="entry name" value="DnaJ_CXXCXGXG"/>
    <property type="match status" value="1"/>
</dbReference>
<dbReference type="PRINTS" id="PR00625">
    <property type="entry name" value="JDOMAIN"/>
</dbReference>
<dbReference type="SMART" id="SM00271">
    <property type="entry name" value="DnaJ"/>
    <property type="match status" value="1"/>
</dbReference>
<dbReference type="SUPFAM" id="SSF46565">
    <property type="entry name" value="Chaperone J-domain"/>
    <property type="match status" value="1"/>
</dbReference>
<dbReference type="SUPFAM" id="SSF57938">
    <property type="entry name" value="DnaJ/Hsp40 cysteine-rich domain"/>
    <property type="match status" value="1"/>
</dbReference>
<dbReference type="SUPFAM" id="SSF49493">
    <property type="entry name" value="HSP40/DnaJ peptide-binding domain"/>
    <property type="match status" value="1"/>
</dbReference>
<dbReference type="PROSITE" id="PS00636">
    <property type="entry name" value="DNAJ_1"/>
    <property type="match status" value="1"/>
</dbReference>
<dbReference type="PROSITE" id="PS50076">
    <property type="entry name" value="DNAJ_2"/>
    <property type="match status" value="1"/>
</dbReference>
<dbReference type="PROSITE" id="PS51188">
    <property type="entry name" value="ZF_CR"/>
    <property type="match status" value="1"/>
</dbReference>
<gene>
    <name type="primary">l(2)tid</name>
    <name type="synonym">tid</name>
</gene>
<evidence type="ECO:0000250" key="1"/>
<evidence type="ECO:0000250" key="2">
    <source>
        <dbReference type="UniProtKB" id="Q96EY1"/>
    </source>
</evidence>
<evidence type="ECO:0000250" key="3">
    <source>
        <dbReference type="UniProtKB" id="Q99M87"/>
    </source>
</evidence>
<evidence type="ECO:0000255" key="4"/>
<evidence type="ECO:0000255" key="5">
    <source>
        <dbReference type="PROSITE-ProRule" id="PRU00286"/>
    </source>
</evidence>
<evidence type="ECO:0000255" key="6">
    <source>
        <dbReference type="PROSITE-ProRule" id="PRU00546"/>
    </source>
</evidence>
<evidence type="ECO:0000256" key="7">
    <source>
        <dbReference type="SAM" id="MobiDB-lite"/>
    </source>
</evidence>
<evidence type="ECO:0000269" key="8">
    <source>
    </source>
</evidence>
<evidence type="ECO:0000305" key="9"/>
<accession>Q24331</accession>
<proteinExistence type="evidence at transcript level"/>